<reference key="1">
    <citation type="journal article" date="2000" name="Science">
        <title>Complete genome sequence of Neisseria meningitidis serogroup B strain MC58.</title>
        <authorList>
            <person name="Tettelin H."/>
            <person name="Saunders N.J."/>
            <person name="Heidelberg J.F."/>
            <person name="Jeffries A.C."/>
            <person name="Nelson K.E."/>
            <person name="Eisen J.A."/>
            <person name="Ketchum K.A."/>
            <person name="Hood D.W."/>
            <person name="Peden J.F."/>
            <person name="Dodson R.J."/>
            <person name="Nelson W.C."/>
            <person name="Gwinn M.L."/>
            <person name="DeBoy R.T."/>
            <person name="Peterson J.D."/>
            <person name="Hickey E.K."/>
            <person name="Haft D.H."/>
            <person name="Salzberg S.L."/>
            <person name="White O."/>
            <person name="Fleischmann R.D."/>
            <person name="Dougherty B.A."/>
            <person name="Mason T.M."/>
            <person name="Ciecko A."/>
            <person name="Parksey D.S."/>
            <person name="Blair E."/>
            <person name="Cittone H."/>
            <person name="Clark E.B."/>
            <person name="Cotton M.D."/>
            <person name="Utterback T.R."/>
            <person name="Khouri H.M."/>
            <person name="Qin H."/>
            <person name="Vamathevan J.J."/>
            <person name="Gill J."/>
            <person name="Scarlato V."/>
            <person name="Masignani V."/>
            <person name="Pizza M."/>
            <person name="Grandi G."/>
            <person name="Sun L."/>
            <person name="Smith H.O."/>
            <person name="Fraser C.M."/>
            <person name="Moxon E.R."/>
            <person name="Rappuoli R."/>
            <person name="Venter J.C."/>
        </authorList>
    </citation>
    <scope>NUCLEOTIDE SEQUENCE [LARGE SCALE GENOMIC DNA]</scope>
    <source>
        <strain>ATCC BAA-335 / MC58</strain>
    </source>
</reference>
<sequence>MASKKAGGSTRNGRDSEAKRLGVKAYGNELIPAGSIIVRQRGTKFHAGDNVGMGKDHTLFAKVDGYVEFKTKGALNRKTVSIRPYTGSEE</sequence>
<gene>
    <name evidence="1" type="primary">rpmA</name>
    <name type="ordered locus">NMB0324</name>
</gene>
<comment type="similarity">
    <text evidence="1">Belongs to the bacterial ribosomal protein bL27 family.</text>
</comment>
<organism>
    <name type="scientific">Neisseria meningitidis serogroup B (strain ATCC BAA-335 / MC58)</name>
    <dbReference type="NCBI Taxonomy" id="122586"/>
    <lineage>
        <taxon>Bacteria</taxon>
        <taxon>Pseudomonadati</taxon>
        <taxon>Pseudomonadota</taxon>
        <taxon>Betaproteobacteria</taxon>
        <taxon>Neisseriales</taxon>
        <taxon>Neisseriaceae</taxon>
        <taxon>Neisseria</taxon>
    </lineage>
</organism>
<evidence type="ECO:0000255" key="1">
    <source>
        <dbReference type="HAMAP-Rule" id="MF_00539"/>
    </source>
</evidence>
<evidence type="ECO:0000256" key="2">
    <source>
        <dbReference type="SAM" id="MobiDB-lite"/>
    </source>
</evidence>
<evidence type="ECO:0000305" key="3"/>
<accession>P66130</accession>
<accession>Q9JRI8</accession>
<proteinExistence type="inferred from homology"/>
<dbReference type="EMBL" id="AE002098">
    <property type="protein sequence ID" value="AAF40769.1"/>
    <property type="molecule type" value="Genomic_DNA"/>
</dbReference>
<dbReference type="PIR" id="G81212">
    <property type="entry name" value="G81212"/>
</dbReference>
<dbReference type="RefSeq" id="NP_273373.1">
    <property type="nucleotide sequence ID" value="NC_003112.2"/>
</dbReference>
<dbReference type="RefSeq" id="WP_002212328.1">
    <property type="nucleotide sequence ID" value="NC_003112.2"/>
</dbReference>
<dbReference type="SMR" id="P66130"/>
<dbReference type="FunCoup" id="P66130">
    <property type="interactions" value="550"/>
</dbReference>
<dbReference type="STRING" id="122586.NMB0324"/>
<dbReference type="PaxDb" id="122586-NMB0324"/>
<dbReference type="GeneID" id="93387415"/>
<dbReference type="KEGG" id="nme:NMB0324"/>
<dbReference type="PATRIC" id="fig|122586.8.peg.411"/>
<dbReference type="HOGENOM" id="CLU_095424_4_1_4"/>
<dbReference type="InParanoid" id="P66130"/>
<dbReference type="OrthoDB" id="9803474at2"/>
<dbReference type="PRO" id="PR:P66130"/>
<dbReference type="Proteomes" id="UP000000425">
    <property type="component" value="Chromosome"/>
</dbReference>
<dbReference type="GO" id="GO:0022625">
    <property type="term" value="C:cytosolic large ribosomal subunit"/>
    <property type="evidence" value="ECO:0000318"/>
    <property type="project" value="GO_Central"/>
</dbReference>
<dbReference type="GO" id="GO:0003735">
    <property type="term" value="F:structural constituent of ribosome"/>
    <property type="evidence" value="ECO:0000318"/>
    <property type="project" value="GO_Central"/>
</dbReference>
<dbReference type="GO" id="GO:0006412">
    <property type="term" value="P:translation"/>
    <property type="evidence" value="ECO:0007669"/>
    <property type="project" value="UniProtKB-UniRule"/>
</dbReference>
<dbReference type="FunFam" id="2.40.50.100:FF:000001">
    <property type="entry name" value="50S ribosomal protein L27"/>
    <property type="match status" value="1"/>
</dbReference>
<dbReference type="Gene3D" id="2.40.50.100">
    <property type="match status" value="1"/>
</dbReference>
<dbReference type="HAMAP" id="MF_00539">
    <property type="entry name" value="Ribosomal_bL27"/>
    <property type="match status" value="1"/>
</dbReference>
<dbReference type="InterPro" id="IPR001684">
    <property type="entry name" value="Ribosomal_bL27"/>
</dbReference>
<dbReference type="InterPro" id="IPR018261">
    <property type="entry name" value="Ribosomal_bL27_CS"/>
</dbReference>
<dbReference type="NCBIfam" id="TIGR00062">
    <property type="entry name" value="L27"/>
    <property type="match status" value="1"/>
</dbReference>
<dbReference type="PANTHER" id="PTHR15893:SF0">
    <property type="entry name" value="LARGE RIBOSOMAL SUBUNIT PROTEIN BL27M"/>
    <property type="match status" value="1"/>
</dbReference>
<dbReference type="PANTHER" id="PTHR15893">
    <property type="entry name" value="RIBOSOMAL PROTEIN L27"/>
    <property type="match status" value="1"/>
</dbReference>
<dbReference type="Pfam" id="PF01016">
    <property type="entry name" value="Ribosomal_L27"/>
    <property type="match status" value="1"/>
</dbReference>
<dbReference type="PRINTS" id="PR00063">
    <property type="entry name" value="RIBOSOMALL27"/>
</dbReference>
<dbReference type="SUPFAM" id="SSF110324">
    <property type="entry name" value="Ribosomal L27 protein-like"/>
    <property type="match status" value="1"/>
</dbReference>
<dbReference type="PROSITE" id="PS00831">
    <property type="entry name" value="RIBOSOMAL_L27"/>
    <property type="match status" value="1"/>
</dbReference>
<keyword id="KW-1185">Reference proteome</keyword>
<keyword id="KW-0687">Ribonucleoprotein</keyword>
<keyword id="KW-0689">Ribosomal protein</keyword>
<name>RL27_NEIMB</name>
<feature type="chain" id="PRO_0000181133" description="Large ribosomal subunit protein bL27">
    <location>
        <begin position="1"/>
        <end position="90"/>
    </location>
</feature>
<feature type="region of interest" description="Disordered" evidence="2">
    <location>
        <begin position="1"/>
        <end position="21"/>
    </location>
</feature>
<protein>
    <recommendedName>
        <fullName evidence="1">Large ribosomal subunit protein bL27</fullName>
    </recommendedName>
    <alternativeName>
        <fullName evidence="3">50S ribosomal protein L27</fullName>
    </alternativeName>
</protein>